<sequence>MSNIEERVKKIVVEQLGVKEEEVTNSASFVEDLGADSLDTVELVMALEEEFETEIPDEEAEKITTVQQAIDYINAHAQG</sequence>
<dbReference type="EMBL" id="CP001339">
    <property type="protein sequence ID" value="ACL72915.1"/>
    <property type="molecule type" value="Genomic_DNA"/>
</dbReference>
<dbReference type="RefSeq" id="WP_012638397.1">
    <property type="nucleotide sequence ID" value="NC_011901.1"/>
</dbReference>
<dbReference type="SMR" id="B8GSL1"/>
<dbReference type="STRING" id="396588.Tgr7_1834"/>
<dbReference type="KEGG" id="tgr:Tgr7_1834"/>
<dbReference type="eggNOG" id="COG0236">
    <property type="taxonomic scope" value="Bacteria"/>
</dbReference>
<dbReference type="HOGENOM" id="CLU_108696_5_1_6"/>
<dbReference type="OrthoDB" id="9804551at2"/>
<dbReference type="UniPathway" id="UPA00094"/>
<dbReference type="Proteomes" id="UP000002383">
    <property type="component" value="Chromosome"/>
</dbReference>
<dbReference type="GO" id="GO:0005829">
    <property type="term" value="C:cytosol"/>
    <property type="evidence" value="ECO:0007669"/>
    <property type="project" value="TreeGrafter"/>
</dbReference>
<dbReference type="GO" id="GO:0016020">
    <property type="term" value="C:membrane"/>
    <property type="evidence" value="ECO:0007669"/>
    <property type="project" value="GOC"/>
</dbReference>
<dbReference type="GO" id="GO:0000035">
    <property type="term" value="F:acyl binding"/>
    <property type="evidence" value="ECO:0007669"/>
    <property type="project" value="TreeGrafter"/>
</dbReference>
<dbReference type="GO" id="GO:0000036">
    <property type="term" value="F:acyl carrier activity"/>
    <property type="evidence" value="ECO:0007669"/>
    <property type="project" value="UniProtKB-UniRule"/>
</dbReference>
<dbReference type="GO" id="GO:0009245">
    <property type="term" value="P:lipid A biosynthetic process"/>
    <property type="evidence" value="ECO:0007669"/>
    <property type="project" value="TreeGrafter"/>
</dbReference>
<dbReference type="FunFam" id="1.10.1200.10:FF:000001">
    <property type="entry name" value="Acyl carrier protein"/>
    <property type="match status" value="1"/>
</dbReference>
<dbReference type="Gene3D" id="1.10.1200.10">
    <property type="entry name" value="ACP-like"/>
    <property type="match status" value="1"/>
</dbReference>
<dbReference type="HAMAP" id="MF_01217">
    <property type="entry name" value="Acyl_carrier"/>
    <property type="match status" value="1"/>
</dbReference>
<dbReference type="InterPro" id="IPR003231">
    <property type="entry name" value="ACP"/>
</dbReference>
<dbReference type="InterPro" id="IPR036736">
    <property type="entry name" value="ACP-like_sf"/>
</dbReference>
<dbReference type="InterPro" id="IPR009081">
    <property type="entry name" value="PP-bd_ACP"/>
</dbReference>
<dbReference type="InterPro" id="IPR006162">
    <property type="entry name" value="Ppantetheine_attach_site"/>
</dbReference>
<dbReference type="NCBIfam" id="TIGR00517">
    <property type="entry name" value="acyl_carrier"/>
    <property type="match status" value="1"/>
</dbReference>
<dbReference type="NCBIfam" id="NF002148">
    <property type="entry name" value="PRK00982.1-2"/>
    <property type="match status" value="1"/>
</dbReference>
<dbReference type="NCBIfam" id="NF002149">
    <property type="entry name" value="PRK00982.1-3"/>
    <property type="match status" value="1"/>
</dbReference>
<dbReference type="NCBIfam" id="NF002150">
    <property type="entry name" value="PRK00982.1-4"/>
    <property type="match status" value="1"/>
</dbReference>
<dbReference type="NCBIfam" id="NF002151">
    <property type="entry name" value="PRK00982.1-5"/>
    <property type="match status" value="1"/>
</dbReference>
<dbReference type="PANTHER" id="PTHR20863">
    <property type="entry name" value="ACYL CARRIER PROTEIN"/>
    <property type="match status" value="1"/>
</dbReference>
<dbReference type="PANTHER" id="PTHR20863:SF76">
    <property type="entry name" value="CARRIER DOMAIN-CONTAINING PROTEIN"/>
    <property type="match status" value="1"/>
</dbReference>
<dbReference type="Pfam" id="PF00550">
    <property type="entry name" value="PP-binding"/>
    <property type="match status" value="1"/>
</dbReference>
<dbReference type="SUPFAM" id="SSF47336">
    <property type="entry name" value="ACP-like"/>
    <property type="match status" value="1"/>
</dbReference>
<dbReference type="PROSITE" id="PS50075">
    <property type="entry name" value="CARRIER"/>
    <property type="match status" value="1"/>
</dbReference>
<dbReference type="PROSITE" id="PS00012">
    <property type="entry name" value="PHOSPHOPANTETHEINE"/>
    <property type="match status" value="1"/>
</dbReference>
<gene>
    <name evidence="1" type="primary">acpP</name>
    <name type="ordered locus">Tgr7_1834</name>
</gene>
<evidence type="ECO:0000255" key="1">
    <source>
        <dbReference type="HAMAP-Rule" id="MF_01217"/>
    </source>
</evidence>
<evidence type="ECO:0000255" key="2">
    <source>
        <dbReference type="PROSITE-ProRule" id="PRU00258"/>
    </source>
</evidence>
<comment type="function">
    <text evidence="1">Carrier of the growing fatty acid chain in fatty acid biosynthesis.</text>
</comment>
<comment type="pathway">
    <text evidence="1">Lipid metabolism; fatty acid biosynthesis.</text>
</comment>
<comment type="subcellular location">
    <subcellularLocation>
        <location evidence="1">Cytoplasm</location>
    </subcellularLocation>
</comment>
<comment type="PTM">
    <text evidence="1">4'-phosphopantetheine is transferred from CoA to a specific serine of apo-ACP by AcpS. This modification is essential for activity because fatty acids are bound in thioester linkage to the sulfhydryl of the prosthetic group.</text>
</comment>
<comment type="similarity">
    <text evidence="1">Belongs to the acyl carrier protein (ACP) family.</text>
</comment>
<reference key="1">
    <citation type="journal article" date="2011" name="Stand. Genomic Sci.">
        <title>Complete genome sequence of 'Thioalkalivibrio sulfidophilus' HL-EbGr7.</title>
        <authorList>
            <person name="Muyzer G."/>
            <person name="Sorokin D.Y."/>
            <person name="Mavromatis K."/>
            <person name="Lapidus A."/>
            <person name="Clum A."/>
            <person name="Ivanova N."/>
            <person name="Pati A."/>
            <person name="d'Haeseleer P."/>
            <person name="Woyke T."/>
            <person name="Kyrpides N.C."/>
        </authorList>
    </citation>
    <scope>NUCLEOTIDE SEQUENCE [LARGE SCALE GENOMIC DNA]</scope>
    <source>
        <strain>HL-EbGR7</strain>
    </source>
</reference>
<organism>
    <name type="scientific">Thioalkalivibrio sulfidiphilus (strain HL-EbGR7)</name>
    <dbReference type="NCBI Taxonomy" id="396588"/>
    <lineage>
        <taxon>Bacteria</taxon>
        <taxon>Pseudomonadati</taxon>
        <taxon>Pseudomonadota</taxon>
        <taxon>Gammaproteobacteria</taxon>
        <taxon>Chromatiales</taxon>
        <taxon>Ectothiorhodospiraceae</taxon>
        <taxon>Thioalkalivibrio</taxon>
    </lineage>
</organism>
<feature type="chain" id="PRO_1000164803" description="Acyl carrier protein">
    <location>
        <begin position="1"/>
        <end position="79"/>
    </location>
</feature>
<feature type="domain" description="Carrier" evidence="2">
    <location>
        <begin position="2"/>
        <end position="77"/>
    </location>
</feature>
<feature type="modified residue" description="O-(pantetheine 4'-phosphoryl)serine" evidence="2">
    <location>
        <position position="37"/>
    </location>
</feature>
<proteinExistence type="inferred from homology"/>
<keyword id="KW-0963">Cytoplasm</keyword>
<keyword id="KW-0275">Fatty acid biosynthesis</keyword>
<keyword id="KW-0276">Fatty acid metabolism</keyword>
<keyword id="KW-0444">Lipid biosynthesis</keyword>
<keyword id="KW-0443">Lipid metabolism</keyword>
<keyword id="KW-0596">Phosphopantetheine</keyword>
<keyword id="KW-0597">Phosphoprotein</keyword>
<keyword id="KW-1185">Reference proteome</keyword>
<protein>
    <recommendedName>
        <fullName evidence="1">Acyl carrier protein</fullName>
        <shortName evidence="1">ACP</shortName>
    </recommendedName>
</protein>
<name>ACP_THISH</name>
<accession>B8GSL1</accession>